<comment type="function">
    <text evidence="1">This protein is an aporepressor. When complexed with L-tryptophan it binds the operator region of the trp operon (5'-ACTAGT-'3') and prevents the initiation of transcription. The complex also regulates trp repressor biosynthesis by binding to its regulatory region.</text>
</comment>
<comment type="subunit">
    <text evidence="1">Homodimer.</text>
</comment>
<comment type="subcellular location">
    <subcellularLocation>
        <location evidence="1">Cytoplasm</location>
    </subcellularLocation>
</comment>
<comment type="similarity">
    <text evidence="1">Belongs to the TrpR family.</text>
</comment>
<proteinExistence type="inferred from homology"/>
<sequence>MTQQSPYSAAVAEQRHQEWLRFVALLQQAYAEDLHLPLLQLMLTPDEREALGTRVRIIEELLRGEMSQRELKNELGAGIATITRGSNSLKSAPVELRQWLEQTLLASDK</sequence>
<name>TRPR_KLEP7</name>
<accession>A6TI07</accession>
<keyword id="KW-0963">Cytoplasm</keyword>
<keyword id="KW-0238">DNA-binding</keyword>
<keyword id="KW-0678">Repressor</keyword>
<keyword id="KW-0804">Transcription</keyword>
<keyword id="KW-0805">Transcription regulation</keyword>
<gene>
    <name evidence="1" type="primary">trpR</name>
    <name type="ordered locus">KPN78578_47670</name>
    <name type="ORF">KPN_04848</name>
</gene>
<reference key="1">
    <citation type="submission" date="2006-09" db="EMBL/GenBank/DDBJ databases">
        <authorList>
            <consortium name="The Klebsiella pneumonia Genome Sequencing Project"/>
            <person name="McClelland M."/>
            <person name="Sanderson E.K."/>
            <person name="Spieth J."/>
            <person name="Clifton W.S."/>
            <person name="Latreille P."/>
            <person name="Sabo A."/>
            <person name="Pepin K."/>
            <person name="Bhonagiri V."/>
            <person name="Porwollik S."/>
            <person name="Ali J."/>
            <person name="Wilson R.K."/>
        </authorList>
    </citation>
    <scope>NUCLEOTIDE SEQUENCE [LARGE SCALE GENOMIC DNA]</scope>
    <source>
        <strain>ATCC 700721 / MGH 78578</strain>
    </source>
</reference>
<evidence type="ECO:0000255" key="1">
    <source>
        <dbReference type="HAMAP-Rule" id="MF_00475"/>
    </source>
</evidence>
<feature type="chain" id="PRO_1000014046" description="Trp operon repressor">
    <location>
        <begin position="1"/>
        <end position="109"/>
    </location>
</feature>
<feature type="DNA-binding region" evidence="1">
    <location>
        <begin position="68"/>
        <end position="91"/>
    </location>
</feature>
<organism>
    <name type="scientific">Klebsiella pneumoniae subsp. pneumoniae (strain ATCC 700721 / MGH 78578)</name>
    <dbReference type="NCBI Taxonomy" id="272620"/>
    <lineage>
        <taxon>Bacteria</taxon>
        <taxon>Pseudomonadati</taxon>
        <taxon>Pseudomonadota</taxon>
        <taxon>Gammaproteobacteria</taxon>
        <taxon>Enterobacterales</taxon>
        <taxon>Enterobacteriaceae</taxon>
        <taxon>Klebsiella/Raoultella group</taxon>
        <taxon>Klebsiella</taxon>
        <taxon>Klebsiella pneumoniae complex</taxon>
    </lineage>
</organism>
<protein>
    <recommendedName>
        <fullName evidence="1">Trp operon repressor</fullName>
    </recommendedName>
</protein>
<dbReference type="EMBL" id="CP000647">
    <property type="protein sequence ID" value="ABR80191.1"/>
    <property type="molecule type" value="Genomic_DNA"/>
</dbReference>
<dbReference type="RefSeq" id="WP_002887809.1">
    <property type="nucleotide sequence ID" value="NC_009648.1"/>
</dbReference>
<dbReference type="SMR" id="A6TI07"/>
<dbReference type="STRING" id="272620.KPN_04848"/>
<dbReference type="PaxDb" id="272620-KPN_04848"/>
<dbReference type="EnsemblBacteria" id="ABR80191">
    <property type="protein sequence ID" value="ABR80191"/>
    <property type="gene ID" value="KPN_04848"/>
</dbReference>
<dbReference type="KEGG" id="kpn:KPN_04848"/>
<dbReference type="HOGENOM" id="CLU_147939_0_0_6"/>
<dbReference type="Proteomes" id="UP000000265">
    <property type="component" value="Chromosome"/>
</dbReference>
<dbReference type="GO" id="GO:0005737">
    <property type="term" value="C:cytoplasm"/>
    <property type="evidence" value="ECO:0007669"/>
    <property type="project" value="UniProtKB-SubCell"/>
</dbReference>
<dbReference type="GO" id="GO:0003700">
    <property type="term" value="F:DNA-binding transcription factor activity"/>
    <property type="evidence" value="ECO:0007669"/>
    <property type="project" value="InterPro"/>
</dbReference>
<dbReference type="GO" id="GO:0043565">
    <property type="term" value="F:sequence-specific DNA binding"/>
    <property type="evidence" value="ECO:0007669"/>
    <property type="project" value="InterPro"/>
</dbReference>
<dbReference type="GO" id="GO:0045892">
    <property type="term" value="P:negative regulation of DNA-templated transcription"/>
    <property type="evidence" value="ECO:0007669"/>
    <property type="project" value="UniProtKB-UniRule"/>
</dbReference>
<dbReference type="FunFam" id="1.10.1270.10:FF:000001">
    <property type="entry name" value="Trp operon repressor"/>
    <property type="match status" value="1"/>
</dbReference>
<dbReference type="Gene3D" id="1.10.1270.10">
    <property type="entry name" value="TrpR-like"/>
    <property type="match status" value="1"/>
</dbReference>
<dbReference type="HAMAP" id="MF_00475">
    <property type="entry name" value="Trp_repressor"/>
    <property type="match status" value="1"/>
</dbReference>
<dbReference type="InterPro" id="IPR000831">
    <property type="entry name" value="Trp_repress"/>
</dbReference>
<dbReference type="InterPro" id="IPR013335">
    <property type="entry name" value="Trp_repress_bac"/>
</dbReference>
<dbReference type="InterPro" id="IPR010921">
    <property type="entry name" value="Trp_repressor/repl_initiator"/>
</dbReference>
<dbReference type="InterPro" id="IPR038116">
    <property type="entry name" value="TrpR-like_sf"/>
</dbReference>
<dbReference type="NCBIfam" id="TIGR01321">
    <property type="entry name" value="TrpR"/>
    <property type="match status" value="1"/>
</dbReference>
<dbReference type="PANTHER" id="PTHR38025">
    <property type="entry name" value="TRP OPERON REPRESSOR"/>
    <property type="match status" value="1"/>
</dbReference>
<dbReference type="PANTHER" id="PTHR38025:SF1">
    <property type="entry name" value="TRP OPERON REPRESSOR"/>
    <property type="match status" value="1"/>
</dbReference>
<dbReference type="Pfam" id="PF01371">
    <property type="entry name" value="Trp_repressor"/>
    <property type="match status" value="1"/>
</dbReference>
<dbReference type="PIRSF" id="PIRSF003196">
    <property type="entry name" value="Trp_repressor"/>
    <property type="match status" value="1"/>
</dbReference>
<dbReference type="SUPFAM" id="SSF48295">
    <property type="entry name" value="TrpR-like"/>
    <property type="match status" value="1"/>
</dbReference>